<accession>Q80U28</accession>
<accession>Q3TQK3</accession>
<accession>Q6P4I6</accession>
<accession>Q80W52</accession>
<accession>Q80WL3</accession>
<accession>Q80WL4</accession>
<accession>Q80WL5</accession>
<accession>Q80WL6</accession>
<accession>Q80WL7</accession>
<accession>Q80WL8</accession>
<accession>Q80WL9</accession>
<accession>Q80WM0</accession>
<accession>Q80WM1</accession>
<accession>Q80WM2</accession>
<accession>Q8CBC1</accession>
<proteinExistence type="evidence at protein level"/>
<feature type="chain" id="PRO_0000278139" description="MAP kinase-activating death domain protein" evidence="1">
    <location>
        <begin position="1"/>
        <end position="1577"/>
    </location>
</feature>
<feature type="domain" description="uDENN" evidence="4">
    <location>
        <begin position="13"/>
        <end position="267"/>
    </location>
</feature>
<feature type="domain" description="cDENN" evidence="4">
    <location>
        <begin position="288"/>
        <end position="428"/>
    </location>
</feature>
<feature type="domain" description="dDENN" evidence="4">
    <location>
        <begin position="430"/>
        <end position="564"/>
    </location>
</feature>
<feature type="domain" description="Death" evidence="3">
    <location>
        <begin position="1336"/>
        <end position="1411"/>
    </location>
</feature>
<feature type="region of interest" description="Disordered" evidence="5">
    <location>
        <begin position="106"/>
        <end position="166"/>
    </location>
</feature>
<feature type="region of interest" description="Disordered" evidence="5">
    <location>
        <begin position="604"/>
        <end position="635"/>
    </location>
</feature>
<feature type="region of interest" description="Disordered" evidence="5">
    <location>
        <begin position="676"/>
        <end position="840"/>
    </location>
</feature>
<feature type="region of interest" description="Disordered" evidence="5">
    <location>
        <begin position="912"/>
        <end position="940"/>
    </location>
</feature>
<feature type="region of interest" description="Disordered" evidence="5">
    <location>
        <begin position="1050"/>
        <end position="1109"/>
    </location>
</feature>
<feature type="region of interest" description="Disordered" evidence="5">
    <location>
        <begin position="1127"/>
        <end position="1272"/>
    </location>
</feature>
<feature type="compositionally biased region" description="Basic and acidic residues" evidence="5">
    <location>
        <begin position="106"/>
        <end position="121"/>
    </location>
</feature>
<feature type="compositionally biased region" description="Low complexity" evidence="5">
    <location>
        <begin position="123"/>
        <end position="140"/>
    </location>
</feature>
<feature type="compositionally biased region" description="Polar residues" evidence="5">
    <location>
        <begin position="141"/>
        <end position="156"/>
    </location>
</feature>
<feature type="compositionally biased region" description="Acidic residues" evidence="5">
    <location>
        <begin position="614"/>
        <end position="629"/>
    </location>
</feature>
<feature type="compositionally biased region" description="Polar residues" evidence="5">
    <location>
        <begin position="688"/>
        <end position="698"/>
    </location>
</feature>
<feature type="compositionally biased region" description="Low complexity" evidence="5">
    <location>
        <begin position="699"/>
        <end position="715"/>
    </location>
</feature>
<feature type="compositionally biased region" description="Polar residues" evidence="5">
    <location>
        <begin position="793"/>
        <end position="803"/>
    </location>
</feature>
<feature type="compositionally biased region" description="Low complexity" evidence="5">
    <location>
        <begin position="826"/>
        <end position="839"/>
    </location>
</feature>
<feature type="compositionally biased region" description="Low complexity" evidence="5">
    <location>
        <begin position="928"/>
        <end position="938"/>
    </location>
</feature>
<feature type="compositionally biased region" description="Basic and acidic residues" evidence="5">
    <location>
        <begin position="1127"/>
        <end position="1141"/>
    </location>
</feature>
<feature type="compositionally biased region" description="Polar residues" evidence="5">
    <location>
        <begin position="1157"/>
        <end position="1172"/>
    </location>
</feature>
<feature type="compositionally biased region" description="Low complexity" evidence="5">
    <location>
        <begin position="1189"/>
        <end position="1203"/>
    </location>
</feature>
<feature type="compositionally biased region" description="Polar residues" evidence="5">
    <location>
        <begin position="1232"/>
        <end position="1248"/>
    </location>
</feature>
<feature type="modified residue" description="Phosphoserine" evidence="2">
    <location>
        <position position="155"/>
    </location>
</feature>
<feature type="modified residue" description="Phosphoserine" evidence="1">
    <location>
        <position position="688"/>
    </location>
</feature>
<feature type="modified residue" description="Phosphoserine" evidence="2">
    <location>
        <position position="691"/>
    </location>
</feature>
<feature type="modified residue" description="Phosphoserine" evidence="1">
    <location>
        <position position="812"/>
    </location>
</feature>
<feature type="modified residue" description="Phosphoserine" evidence="25">
    <location>
        <position position="817"/>
    </location>
</feature>
<feature type="modified residue" description="Phosphoserine" evidence="25">
    <location>
        <position position="819"/>
    </location>
</feature>
<feature type="modified residue" description="Phosphoserine" evidence="2">
    <location>
        <position position="857"/>
    </location>
</feature>
<feature type="modified residue" description="Phosphoserine" evidence="2">
    <location>
        <position position="861"/>
    </location>
</feature>
<feature type="modified residue" description="Phosphoserine" evidence="2">
    <location>
        <position position="915"/>
    </location>
</feature>
<feature type="modified residue" description="Phosphoserine" evidence="2">
    <location>
        <position position="920"/>
    </location>
</feature>
<feature type="modified residue" description="Phosphoserine" evidence="1">
    <location>
        <position position="929"/>
    </location>
</feature>
<feature type="modified residue" description="Phosphoserine" evidence="25">
    <location>
        <position position="1058"/>
    </location>
</feature>
<feature type="modified residue" description="Phosphothreonine" evidence="1">
    <location>
        <position position="1060"/>
    </location>
</feature>
<feature type="modified residue" description="Phosphothreonine" evidence="25">
    <location>
        <position position="1065"/>
    </location>
</feature>
<feature type="modified residue" description="Phosphoserine" evidence="25">
    <location>
        <position position="1109"/>
    </location>
</feature>
<feature type="modified residue" description="Phosphothreonine" evidence="25">
    <location>
        <position position="1235"/>
    </location>
</feature>
<feature type="modified residue" description="Phosphoserine" evidence="25">
    <location>
        <position position="1237"/>
    </location>
</feature>
<feature type="modified residue" description="Phosphoserine" evidence="2">
    <location>
        <position position="1266"/>
    </location>
</feature>
<feature type="splice variant" id="VSP_052299" description="In isoform 7 and isoform 11." evidence="17">
    <original>EAADSTEMGDKATAGISKPLPPVPPS</original>
    <variation>VREHLAG</variation>
    <location>
        <begin position="719"/>
        <end position="744"/>
    </location>
</feature>
<feature type="splice variant" id="VSP_052300" description="In isoform 5, isoform 6, isoform 9, isoform 10 and isoform 12." evidence="17">
    <location>
        <begin position="719"/>
        <end position="743"/>
    </location>
</feature>
<feature type="splice variant" id="VSP_052301" description="In isoform 3, isoform 5, isoform 6, isoform 8, isoform 9, isoform 10, isoform 11, isoform 12, isoform 13 and isoform 14." evidence="15 16 17">
    <location>
        <begin position="884"/>
        <end position="903"/>
    </location>
</feature>
<feature type="splice variant" id="VSP_052302" description="In isoform 4, isoform 5, isoform 6, isoform 7, isoform 8, isoform 9, isoform 10, isoform 11 and isoform 12." evidence="17">
    <original>ELWNKHQEVKKQKALEKQR</original>
    <variation>G</variation>
    <location>
        <begin position="1120"/>
        <end position="1138"/>
    </location>
</feature>
<feature type="splice variant" id="VSP_052303" description="In isoform 13." evidence="16">
    <original>ELWNKHQEVKKQKALE</original>
    <variation>DLTENLLMFGVSLFTL</variation>
    <location>
        <begin position="1120"/>
        <end position="1135"/>
    </location>
</feature>
<feature type="splice variant" id="VSP_052304" description="In isoform 13." evidence="16">
    <location>
        <begin position="1136"/>
        <end position="1577"/>
    </location>
</feature>
<feature type="splice variant" id="VSP_052305" description="In isoform 10 and isoform 12." evidence="17">
    <location>
        <begin position="1172"/>
        <end position="1198"/>
    </location>
</feature>
<feature type="splice variant" id="VSP_052306" description="In isoform 9." evidence="17">
    <location>
        <begin position="1183"/>
        <end position="1200"/>
    </location>
</feature>
<feature type="splice variant" id="VSP_052307" description="In isoform 15." evidence="16">
    <location>
        <begin position="1196"/>
        <end position="1198"/>
    </location>
</feature>
<feature type="splice variant" id="VSP_052308" description="In isoform 6." evidence="17">
    <location>
        <begin position="1198"/>
        <end position="1200"/>
    </location>
</feature>
<feature type="splice variant" id="VSP_052309" description="In isoform 2, isoform 3, isoform 4, isoform 5, isoform 7, isoform 8, isoform 11 and isoform 14." evidence="15 17">
    <original>V</original>
    <variation>VV</variation>
    <location>
        <position position="1199"/>
    </location>
</feature>
<feature type="splice variant" id="VSP_052310" description="In isoform 12." evidence="17">
    <location>
        <begin position="1219"/>
        <end position="1577"/>
    </location>
</feature>
<feature type="splice variant" id="VSP_052311" description="In isoform 4, isoform 5, isoform 6, isoform 7, isoform 8, isoform 9, isoform 10 and isoform 11." evidence="17">
    <location>
        <begin position="1287"/>
        <end position="1307"/>
    </location>
</feature>
<feature type="splice variant" id="VSP_052312" description="In isoform 2, isoform 4, isoform 5, isoform 6, isoform 7, isoform 8, isoform 9, isoform 10 and isoform 11." evidence="17">
    <original>CRELYYCVKDSMERAAARQQSIKP</original>
    <variation>VLRVCVWAGDWI</variation>
    <location>
        <begin position="1511"/>
        <end position="1534"/>
    </location>
</feature>
<feature type="splice variant" id="VSP_052313" description="In isoform 2, isoform 4, isoform 7, isoform 8 and isoform 11." evidence="17">
    <original>LEGINLKFMHNQFLKLKKW</original>
    <variation>PGRDQSQVHAQPGFHRAESH</variation>
    <location>
        <begin position="1559"/>
        <end position="1577"/>
    </location>
</feature>
<feature type="splice variant" id="VSP_052314" description="In isoform 5, isoform 6, isoform 9 and isoform 10." evidence="17">
    <original>LEGINLKFMHNQFLKLKKW</original>
    <variation>PGRDQSQVHAQPVPEIKEVVSHKYKTPMAHEICYSVLCLFSYVAAVRSSEEDLRTPPRPVSS</variation>
    <location>
        <begin position="1559"/>
        <end position="1577"/>
    </location>
</feature>
<feature type="splice variant" id="VSP_052315" description="In isoform 14." evidence="15">
    <original>FLKLKKW</original>
    <variation>ERKVFIELNHIKKCNTVRGVFVLEEFVPEIKEVVSHKYKTPMAHEICYSVLCLFSYVAAVRSSEEDLRTPPRPVSS</variation>
    <location>
        <begin position="1571"/>
        <end position="1577"/>
    </location>
</feature>
<feature type="sequence conflict" description="In Ref. 3; BAC29392, 4; CAM17578 and 5; AAH63386." evidence="18" ref="3 4 5">
    <original>T</original>
    <variation>A</variation>
    <location>
        <position position="132"/>
    </location>
</feature>
<feature type="sequence conflict" description="In Ref. 3; BAC29392, 4; CAM17578 and 5; AAH63386." evidence="18" ref="3 4 5">
    <original>I</original>
    <variation>V</variation>
    <location>
        <position position="152"/>
    </location>
</feature>
<feature type="sequence conflict" description="In Ref. 1; AAP22159/AAP22160/AAP22161/AAP22162/AAP22163/AAP22164/AAP22165/AAP22166/AAP22167/AAP22168, 3; BAC29392, 4; CAM17578 and 5; AAH63386." evidence="18" ref="1 3 4 5">
    <original>W</original>
    <variation>R</variation>
    <location>
        <position position="157"/>
    </location>
</feature>
<feature type="sequence conflict" description="In Ref. 3; BAE37379." evidence="18" ref="3">
    <original>S</original>
    <variation>R</variation>
    <location>
        <position position="1159"/>
    </location>
</feature>
<sequence length="1577" mass="175180">MVQKKFCPRLLDYLVIVGARHPSSDSVAQTPELLRRYPLEDHPEFPLPPDVVFFCQPEGCLSVRQRRMSLRDDTSFVFTLTDKDTGVTRYGICVNFYRSFQKRMPKEKVEGGAGPRGKEGAHTSGASEEAATGSSESGSTLQPPSADSTPDINQSPWGKRRAKAGSRSRNSTLTSLCVLSHYPFFSTFRECLYTLKRLVDCCSERLLGKKLGIPRGVQRDTMWRIFTGSLLVEEKSSALLQDLREIEAWIYRLLRSPVPVSGQKRVDIEVLPQELQQALTFALPDPSRFTLVDFPLHLPLELLGVDACLQVLTCILLEHKVVLQSRDYNALSMSVMAFVAMIYPLEYMFPVIPLLPTCMASAEQLLLAPTPYIIGVPASFFLYKLDFKMPDDVWLVDLDSNRVIAPTNAEVLPILPEPESLELKKHLKQALASMSLNTQPILNLEKFHEGQEIPLLLGRPSNDLQSTPSTEFNPLIYGNDVDSVDVATRVAMVRFFNSANVLQGFQMHTRTLRLFPRPVVAFQAGSFLASRPRQTPFAEKLARTQAVEYFGEWILNPSNYAFQRIHNNTFDPALIGDKPKWYAHQLQPIHYRVYDGNSQLAEALSVPPERDSDSDPTEDSGSDSQDYDDSSSSYSSLGDFVSEMMKCDINGDTPNVDPLTHAALGDASEVEIDELQPQKEGEEPGPDSENSQENPPLRSSSSTTASSSPSTVVHSAHSEAADSTEMGDKATAGISKPLPPVPPSICKSTVDRRQTETGEGSVCQRTYDNPYFEPQYGFPPEEDEEEQGESYTPRFSQHVSGSRAQKLLRPNSLKLASDSDAESDSRASSPNSTVSNNSTEGFGGIMSFASSLYRNHSTSFSLSNLTLPTKGAREKTTPFPSLKVFGLNTLMEIVTEAGPGSGEGNRRALVDQKSSVIKHSPTVKREPSSPQGRSSNSSENQQFLKEVVHSVLDGQGVGWLNMKKVRRLLESEQLRVFVLSKLNRAVQSEDDARQDVIQDVEISRKVYKGMLDLLKCTVLSLEQSYAHAGLGGMASIFGLLEIAQTHYYSKEPDKRKRSPTENVNTPVGKDPGLAGRGDPKAMAQLRVPQLGPRAPSATGKGPKELDTRSLKEENFVASVELWNKHQEVKKQKALEKQRPEGIKPVFDLGETEEKKSQMSADSGVSLTSASQRTDQDSVIGVSPAVMIRSSSQDSEVSTVSNSSGETLGADSDLSSNAGDGPGGEGSAHLASSRATLSDSEIETNSATSAIFGKAHSLKPKEKPAGSPIRSSEDVSQRVYLYEGLLGRDKGSMWDQLEDAAMETFSLSKERSTLWDQMQFWEDAFLDAVMLEREGMGMDQGPQEMIDRYLSLGEHDRKRLEDDEDRLLATLLHNLISYMLLMKVNKNDIRKKVRRLMGKSHIGLVYSQQVNEVLDQLNSLNGRDLSIRSSGSRHMKKQTFVVHAGTDTNGDIFFMEVCDDCVVLRSNIGTVYERWWYEKLINMTYCPKTKVLCLWRRNGSETQLNKFYTKKCRELYYCVKDSMERAAARQQSIKPGPELGGEFPVQDMKTGEGGLLQVTLEGINLKFMHNQFLKLKKW</sequence>
<organism>
    <name type="scientific">Mus musculus</name>
    <name type="common">Mouse</name>
    <dbReference type="NCBI Taxonomy" id="10090"/>
    <lineage>
        <taxon>Eukaryota</taxon>
        <taxon>Metazoa</taxon>
        <taxon>Chordata</taxon>
        <taxon>Craniata</taxon>
        <taxon>Vertebrata</taxon>
        <taxon>Euteleostomi</taxon>
        <taxon>Mammalia</taxon>
        <taxon>Eutheria</taxon>
        <taxon>Euarchontoglires</taxon>
        <taxon>Glires</taxon>
        <taxon>Rodentia</taxon>
        <taxon>Myomorpha</taxon>
        <taxon>Muroidea</taxon>
        <taxon>Muridae</taxon>
        <taxon>Murinae</taxon>
        <taxon>Mus</taxon>
        <taxon>Mus</taxon>
    </lineage>
</organism>
<name>MADD_MOUSE</name>
<comment type="function">
    <text evidence="1 2 6 7 11 12">Guanyl-nucleotide exchange factor that regulates small GTPases of the Rab family (PubMed:11359932, PubMed:18559336). Converts GDP-bound inactive form of RAB27A and RAB27B to the GTP-bound active forms (PubMed:18559336). Converts GDP-bound inactive form of RAB3A, RAB3C and RAB3D to the GTP-bound active forms, GTPases involved in synaptic vesicle exocytosis and vesicle secretion (By similarity). Plays a role in synaptic vesicle formation and in vesicle trafficking at the neuromuscular junction (PubMed:11359932, PubMed:12388783, PubMed:18849981). Involved in up-regulating a post-docking step of synaptic exocytosis in central synapses (PubMed:12388783). Probably by binding to the motor proteins KIF1B and KIF1A, mediates motor-dependent transport of GTP-RAB3A-positive vesicles to the presynaptic nerve terminals (PubMed:18849981). Plays a role in TNFA-mediated activation of the MAPK pathway, including ERK1/2 (By similarity). May link TNFRSF1A with MAP kinase activation (By similarity). May be involved in the regulation of TNFA-induced apoptosis (By similarity).</text>
</comment>
<comment type="subunit">
    <text evidence="2 12">Interacts (via death domain) with TNFRSF1A (via death domain) (By similarity). Interacts with PIDD1 (By similarity). Interacts with YWHAZ (By similarity). Interacts (via death domain) with KIF1B; links the motor KIF1B to Rab3-carrying vesicles in anterograde synaptic vesicle transport (PubMed:18849981). Interacts with KIF1A (PubMed:18849981). Interacts (via uDENN domain) with RAB3A, RAB3B, RAB3C and RAB3D; the GTP-bound form of the Rab proteins is preferred for interaction (PubMed:18849981).</text>
</comment>
<comment type="subcellular location">
    <subcellularLocation>
        <location evidence="2">Cell membrane</location>
    </subcellularLocation>
    <subcellularLocation>
        <location evidence="2">Cytoplasm</location>
    </subcellularLocation>
    <subcellularLocation>
        <location evidence="12">Cell projection</location>
        <location evidence="12">Axon</location>
    </subcellularLocation>
</comment>
<comment type="alternative products">
    <event type="alternative splicing"/>
    <isoform>
        <id>Q80U28-1</id>
        <name evidence="8">1</name>
        <sequence type="displayed"/>
    </isoform>
    <isoform>
        <id>Q80U28-2</id>
        <name evidence="13">2</name>
        <name evidence="13">IG20</name>
        <sequence type="described" ref="VSP_052309 VSP_052312 VSP_052313"/>
    </isoform>
    <isoform>
        <id>Q80U28-3</id>
        <name evidence="9">3</name>
        <sequence type="described" ref="VSP_052301 VSP_052309"/>
    </isoform>
    <isoform>
        <id>Q80U28-4</id>
        <name evidence="13">4</name>
        <name evidence="13">IG20-PASV</name>
        <sequence type="described" ref="VSP_052302 VSP_052309 VSP_052311 VSP_052312 VSP_052313"/>
    </isoform>
    <isoform>
        <id>Q80U28-5</id>
        <name evidence="13">5</name>
        <name evidence="13">IG20-SV4</name>
        <sequence type="described" ref="VSP_052300 VSP_052301 VSP_052302 VSP_052309 VSP_052311 VSP_052312 VSP_052314"/>
    </isoform>
    <isoform>
        <id>Q80U28-6</id>
        <name evidence="13">6</name>
        <name evidence="13">IG20-SV5</name>
        <sequence type="described" ref="VSP_052300 VSP_052301 VSP_052302 VSP_052308 VSP_052311 VSP_052312 VSP_052314"/>
    </isoform>
    <isoform>
        <id>Q80U28-7</id>
        <name evidence="13">7</name>
        <name evidence="13">IG20-SV2</name>
        <sequence type="described" ref="VSP_052299 VSP_052302 VSP_052309 VSP_052311 VSP_052312 VSP_052313"/>
    </isoform>
    <isoform>
        <id>Q80U28-8</id>
        <name evidence="13">8</name>
        <name evidence="13">IG20-SV1</name>
        <sequence type="described" ref="VSP_052301 VSP_052302 VSP_052309 VSP_052311 VSP_052312 VSP_052313"/>
    </isoform>
    <isoform>
        <id>Q80U28-9</id>
        <name evidence="13">9</name>
        <name evidence="13">IG20-SV6</name>
        <sequence type="described" ref="VSP_052300 VSP_052301 VSP_052302 VSP_052306 VSP_052311 VSP_052312 VSP_052314"/>
    </isoform>
    <isoform>
        <id>Q80U28-10</id>
        <name evidence="13">10</name>
        <name evidence="13">IG20-SV7</name>
        <sequence type="described" ref="VSP_052300 VSP_052301 VSP_052302 VSP_052305 VSP_052311 VSP_052312 VSP_052314"/>
    </isoform>
    <isoform>
        <id>Q80U28-11</id>
        <name evidence="13">11</name>
        <name evidence="13">IG20-SV3</name>
        <sequence type="described" ref="VSP_052299 VSP_052301 VSP_052302 VSP_052309 VSP_052311 VSP_052312 VSP_052313"/>
    </isoform>
    <isoform>
        <id>Q80U28-12</id>
        <name evidence="13">12</name>
        <name evidence="13">IG20-SV8</name>
        <sequence type="described" ref="VSP_052300 VSP_052301 VSP_052302 VSP_052305 VSP_052310"/>
    </isoform>
    <isoform>
        <id>Q80U28-13</id>
        <name evidence="10">13</name>
        <sequence type="described" ref="VSP_052301 VSP_052303 VSP_052304"/>
    </isoform>
    <isoform>
        <id>Q80U28-14</id>
        <name evidence="9">14</name>
        <sequence type="described" ref="VSP_052301 VSP_052309 VSP_052315"/>
    </isoform>
    <isoform>
        <id>Q80U28-15</id>
        <name evidence="10">15</name>
        <sequence type="described" ref="VSP_052307"/>
    </isoform>
</comment>
<comment type="tissue specificity">
    <text evidence="12">Expressed in the brain.</text>
</comment>
<comment type="disruption phenotype">
    <text evidence="6 7 11 12">Apparently normal in utero development but immediate death after birth, probably due acute respiratory failure (PubMed:11359932). Absent GDP/GTP exchange activity of Rab3A (PubMed:11359932). Apparently normal development of the central nervous system during embryonic stages (PubMed:11359932). At 18.5 dpc, no evoked action potentials of the diaphragm and gastrocnemius muscles in response to electrical stimulation of the phrenic and sciatic nerves, respectively. In contrast, axonal conduction of the spinal cord and the phrenic nerve are not impaired. Reduced total numbers of synaptic vesicles at the neuromuscular junction, especially those docked at the presynaptic plasma membrane, whereas postsynaptic structures and functions appear normal (PubMed:11359932). Reduction of excitatory postsynaptic current amplitude in neurons (PubMed:12388783). Synaptic vesicles locate remote from the presynaptic membrane in the central region instead of at the active zones of the presynaptic terminal (PubMed:12388783). RNAi-mediated knockdown results in reduced levels of Rab27a in the activated GTP-bound form (PubMed:18559336). In melanocytes, results in aggregation and perinuclear clustering of melanosomes (PubMed:18559336). RNAi-mediated knockdown in hippocampal neurons leads reduced interaction between Kif1b and Rab3 and to reduced axonal transport of Rab3 (PubMed:18849981).</text>
</comment>
<comment type="similarity">
    <text evidence="18">Belongs to the MADD family.</text>
</comment>
<comment type="sequence caution" evidence="18">
    <conflict type="erroneous initiation">
        <sequence resource="EMBL-CDS" id="BAC65539"/>
    </conflict>
    <text>Extended N-terminus.</text>
</comment>
<dbReference type="EMBL" id="AY263980">
    <property type="protein sequence ID" value="AAP22159.1"/>
    <property type="molecule type" value="mRNA"/>
</dbReference>
<dbReference type="EMBL" id="AY263981">
    <property type="protein sequence ID" value="AAP22160.1"/>
    <property type="molecule type" value="mRNA"/>
</dbReference>
<dbReference type="EMBL" id="AY263982">
    <property type="protein sequence ID" value="AAP22161.1"/>
    <property type="molecule type" value="mRNA"/>
</dbReference>
<dbReference type="EMBL" id="AY263983">
    <property type="protein sequence ID" value="AAP22162.1"/>
    <property type="molecule type" value="mRNA"/>
</dbReference>
<dbReference type="EMBL" id="AY263984">
    <property type="protein sequence ID" value="AAP22163.1"/>
    <property type="molecule type" value="mRNA"/>
</dbReference>
<dbReference type="EMBL" id="AY263985">
    <property type="protein sequence ID" value="AAP22164.1"/>
    <property type="molecule type" value="mRNA"/>
</dbReference>
<dbReference type="EMBL" id="AY263986">
    <property type="protein sequence ID" value="AAP22165.1"/>
    <property type="molecule type" value="mRNA"/>
</dbReference>
<dbReference type="EMBL" id="AY263987">
    <property type="protein sequence ID" value="AAP22166.1"/>
    <property type="molecule type" value="mRNA"/>
</dbReference>
<dbReference type="EMBL" id="AY263988">
    <property type="protein sequence ID" value="AAP22167.1"/>
    <property type="molecule type" value="mRNA"/>
</dbReference>
<dbReference type="EMBL" id="AY263989">
    <property type="protein sequence ID" value="AAP22168.1"/>
    <property type="molecule type" value="mRNA"/>
</dbReference>
<dbReference type="EMBL" id="AK122257">
    <property type="protein sequence ID" value="BAC65539.1"/>
    <property type="status" value="ALT_INIT"/>
    <property type="molecule type" value="mRNA"/>
</dbReference>
<dbReference type="EMBL" id="AK036347">
    <property type="protein sequence ID" value="BAC29392.1"/>
    <property type="molecule type" value="mRNA"/>
</dbReference>
<dbReference type="EMBL" id="AK163518">
    <property type="protein sequence ID" value="BAE37379.1"/>
    <property type="molecule type" value="mRNA"/>
</dbReference>
<dbReference type="EMBL" id="AL691450">
    <property type="protein sequence ID" value="CAM17578.1"/>
    <property type="molecule type" value="Genomic_DNA"/>
</dbReference>
<dbReference type="EMBL" id="BC042212">
    <property type="protein sequence ID" value="AAH42212.1"/>
    <property type="molecule type" value="mRNA"/>
</dbReference>
<dbReference type="EMBL" id="BC063386">
    <property type="protein sequence ID" value="AAH63386.1"/>
    <property type="molecule type" value="mRNA"/>
</dbReference>
<dbReference type="CCDS" id="CCDS38178.1">
    <molecule id="Q80U28-3"/>
</dbReference>
<dbReference type="CCDS" id="CCDS50635.1">
    <molecule id="Q80U28-14"/>
</dbReference>
<dbReference type="CCDS" id="CCDS50638.1">
    <molecule id="Q80U28-1"/>
</dbReference>
<dbReference type="RefSeq" id="NP_001171190.1">
    <property type="nucleotide sequence ID" value="NM_001177719.1"/>
</dbReference>
<dbReference type="RefSeq" id="NP_001171191.1">
    <property type="nucleotide sequence ID" value="NM_001177720.1"/>
</dbReference>
<dbReference type="RefSeq" id="NP_663502.3">
    <property type="nucleotide sequence ID" value="NM_145527.4"/>
</dbReference>
<dbReference type="RefSeq" id="XP_017173117.1">
    <property type="nucleotide sequence ID" value="XM_017317628.1"/>
</dbReference>
<dbReference type="BioGRID" id="230724">
    <property type="interactions" value="11"/>
</dbReference>
<dbReference type="FunCoup" id="Q80U28">
    <property type="interactions" value="1209"/>
</dbReference>
<dbReference type="IntAct" id="Q80U28">
    <property type="interactions" value="4"/>
</dbReference>
<dbReference type="MINT" id="Q80U28"/>
<dbReference type="STRING" id="10090.ENSMUSP00000069350"/>
<dbReference type="GlyGen" id="Q80U28">
    <property type="glycosylation" value="2 sites, 1 N-linked glycan (1 site), 1 O-linked glycan (1 site)"/>
</dbReference>
<dbReference type="iPTMnet" id="Q80U28"/>
<dbReference type="PhosphoSitePlus" id="Q80U28"/>
<dbReference type="SwissPalm" id="Q80U28"/>
<dbReference type="jPOST" id="Q80U28"/>
<dbReference type="PaxDb" id="10090-ENSMUSP00000077094"/>
<dbReference type="PeptideAtlas" id="Q80U28"/>
<dbReference type="ProteomicsDB" id="295761">
    <molecule id="Q80U28-1"/>
</dbReference>
<dbReference type="ProteomicsDB" id="295762">
    <molecule id="Q80U28-2"/>
</dbReference>
<dbReference type="ProteomicsDB" id="295763">
    <molecule id="Q80U28-3"/>
</dbReference>
<dbReference type="ProteomicsDB" id="295764">
    <molecule id="Q80U28-4"/>
</dbReference>
<dbReference type="ProteomicsDB" id="295765">
    <molecule id="Q80U28-5"/>
</dbReference>
<dbReference type="ProteomicsDB" id="295766">
    <molecule id="Q80U28-6"/>
</dbReference>
<dbReference type="ProteomicsDB" id="295767">
    <molecule id="Q80U28-7"/>
</dbReference>
<dbReference type="ProteomicsDB" id="295768">
    <molecule id="Q80U28-8"/>
</dbReference>
<dbReference type="ProteomicsDB" id="295769">
    <molecule id="Q80U28-9"/>
</dbReference>
<dbReference type="ProteomicsDB" id="295770">
    <molecule id="Q80U28-10"/>
</dbReference>
<dbReference type="ProteomicsDB" id="295771">
    <molecule id="Q80U28-11"/>
</dbReference>
<dbReference type="ProteomicsDB" id="295772">
    <molecule id="Q80U28-12"/>
</dbReference>
<dbReference type="ProteomicsDB" id="295773">
    <molecule id="Q80U28-13"/>
</dbReference>
<dbReference type="ProteomicsDB" id="295774">
    <molecule id="Q80U28-14"/>
</dbReference>
<dbReference type="ProteomicsDB" id="295775">
    <molecule id="Q80U28-15"/>
</dbReference>
<dbReference type="DNASU" id="228355"/>
<dbReference type="GeneID" id="228355"/>
<dbReference type="KEGG" id="mmu:228355"/>
<dbReference type="AGR" id="MGI:2444672"/>
<dbReference type="CTD" id="8567"/>
<dbReference type="MGI" id="MGI:2444672">
    <property type="gene designation" value="Madd"/>
</dbReference>
<dbReference type="eggNOG" id="KOG3570">
    <property type="taxonomic scope" value="Eukaryota"/>
</dbReference>
<dbReference type="InParanoid" id="Q80U28"/>
<dbReference type="Reactome" id="R-MMU-5357905">
    <property type="pathway name" value="Regulation of TNFR1 signaling"/>
</dbReference>
<dbReference type="Reactome" id="R-MMU-8876198">
    <property type="pathway name" value="RAB GEFs exchange GTP for GDP on RABs"/>
</dbReference>
<dbReference type="BioGRID-ORCS" id="228355">
    <property type="hits" value="1 hit in 76 CRISPR screens"/>
</dbReference>
<dbReference type="ChiTaRS" id="Madd">
    <property type="organism name" value="mouse"/>
</dbReference>
<dbReference type="PRO" id="PR:Q80U28"/>
<dbReference type="Proteomes" id="UP000000589">
    <property type="component" value="Unplaced"/>
</dbReference>
<dbReference type="RNAct" id="Q80U28">
    <property type="molecule type" value="protein"/>
</dbReference>
<dbReference type="GO" id="GO:1904115">
    <property type="term" value="C:axon cytoplasm"/>
    <property type="evidence" value="ECO:0007669"/>
    <property type="project" value="GOC"/>
</dbReference>
<dbReference type="GO" id="GO:0016020">
    <property type="term" value="C:membrane"/>
    <property type="evidence" value="ECO:0000250"/>
    <property type="project" value="UniProtKB"/>
</dbReference>
<dbReference type="GO" id="GO:0005886">
    <property type="term" value="C:plasma membrane"/>
    <property type="evidence" value="ECO:0007669"/>
    <property type="project" value="UniProtKB-SubCell"/>
</dbReference>
<dbReference type="GO" id="GO:0005085">
    <property type="term" value="F:guanyl-nucleotide exchange factor activity"/>
    <property type="evidence" value="ECO:0007669"/>
    <property type="project" value="UniProtKB-KW"/>
</dbReference>
<dbReference type="GO" id="GO:0048490">
    <property type="term" value="P:anterograde synaptic vesicle transport"/>
    <property type="evidence" value="ECO:0000314"/>
    <property type="project" value="SynGO"/>
</dbReference>
<dbReference type="GO" id="GO:0097194">
    <property type="term" value="P:execution phase of apoptosis"/>
    <property type="evidence" value="ECO:0000315"/>
    <property type="project" value="UniProtKB"/>
</dbReference>
<dbReference type="GO" id="GO:2001234">
    <property type="term" value="P:negative regulation of apoptotic signaling pathway"/>
    <property type="evidence" value="ECO:0000315"/>
    <property type="project" value="MGI"/>
</dbReference>
<dbReference type="GO" id="GO:0051726">
    <property type="term" value="P:regulation of cell cycle"/>
    <property type="evidence" value="ECO:0000315"/>
    <property type="project" value="UniProtKB"/>
</dbReference>
<dbReference type="FunFam" id="3.40.50.11500:FF:000002">
    <property type="entry name" value="MAP kinase-activating death domain protein-like Protein"/>
    <property type="match status" value="1"/>
</dbReference>
<dbReference type="Gene3D" id="3.30.450.200">
    <property type="match status" value="1"/>
</dbReference>
<dbReference type="Gene3D" id="3.40.50.11500">
    <property type="match status" value="1"/>
</dbReference>
<dbReference type="InterPro" id="IPR001194">
    <property type="entry name" value="cDENN_dom"/>
</dbReference>
<dbReference type="InterPro" id="IPR005112">
    <property type="entry name" value="dDENN_dom"/>
</dbReference>
<dbReference type="InterPro" id="IPR056574">
    <property type="entry name" value="Death_MADD"/>
</dbReference>
<dbReference type="InterPro" id="IPR043153">
    <property type="entry name" value="DENN_C"/>
</dbReference>
<dbReference type="InterPro" id="IPR039980">
    <property type="entry name" value="MADD"/>
</dbReference>
<dbReference type="InterPro" id="IPR037516">
    <property type="entry name" value="Tripartite_DENN"/>
</dbReference>
<dbReference type="InterPro" id="IPR005113">
    <property type="entry name" value="uDENN_dom"/>
</dbReference>
<dbReference type="PANTHER" id="PTHR13008:SF7">
    <property type="entry name" value="MAP KINASE-ACTIVATING DEATH DOMAIN PROTEIN"/>
    <property type="match status" value="1"/>
</dbReference>
<dbReference type="PANTHER" id="PTHR13008">
    <property type="entry name" value="MAP-KINASE ACTIVATING DEATH DOMAIN PROTEIN MADD /DENN/AEX-3 C.ELEGANS"/>
    <property type="match status" value="1"/>
</dbReference>
<dbReference type="Pfam" id="PF23629">
    <property type="entry name" value="Death_MADD"/>
    <property type="match status" value="1"/>
</dbReference>
<dbReference type="Pfam" id="PF02141">
    <property type="entry name" value="DENN"/>
    <property type="match status" value="1"/>
</dbReference>
<dbReference type="Pfam" id="PF25328">
    <property type="entry name" value="PH_MADD"/>
    <property type="match status" value="1"/>
</dbReference>
<dbReference type="Pfam" id="PF03456">
    <property type="entry name" value="uDENN"/>
    <property type="match status" value="1"/>
</dbReference>
<dbReference type="SMART" id="SM00801">
    <property type="entry name" value="dDENN"/>
    <property type="match status" value="1"/>
</dbReference>
<dbReference type="SMART" id="SM00799">
    <property type="entry name" value="DENN"/>
    <property type="match status" value="1"/>
</dbReference>
<dbReference type="SMART" id="SM00800">
    <property type="entry name" value="uDENN"/>
    <property type="match status" value="1"/>
</dbReference>
<dbReference type="PROSITE" id="PS50211">
    <property type="entry name" value="DENN"/>
    <property type="match status" value="1"/>
</dbReference>
<reference evidence="18 20" key="1">
    <citation type="submission" date="2003-03" db="EMBL/GenBank/DDBJ databases">
        <title>Genomic organization and alternative splicing of IG20 isoforms in mouse tissues.</title>
        <authorList>
            <person name="Al-Zoubi A.M."/>
            <person name="Efimova E.V."/>
            <person name="Lu S."/>
            <person name="Prabhakar B.P."/>
        </authorList>
    </citation>
    <scope>NUCLEOTIDE SEQUENCE [MRNA] (ISOFORMS 2; 4; 5; 6; 7; 8; 9; 10; 11 AND 12)</scope>
    <source>
        <strain evidence="20">C57BL/6J</strain>
    </source>
</reference>
<reference evidence="18 22" key="2">
    <citation type="journal article" date="2003" name="DNA Res.">
        <title>Prediction of the coding sequences of mouse homologues of KIAA gene: II. The complete nucleotide sequences of 400 mouse KIAA-homologous cDNAs identified by screening of terminal sequences of cDNA clones randomly sampled from size-fractionated libraries.</title>
        <authorList>
            <person name="Okazaki N."/>
            <person name="Kikuno R."/>
            <person name="Ohara R."/>
            <person name="Inamoto S."/>
            <person name="Aizawa H."/>
            <person name="Yuasa S."/>
            <person name="Nakajima D."/>
            <person name="Nagase T."/>
            <person name="Ohara O."/>
            <person name="Koga H."/>
        </authorList>
    </citation>
    <scope>NUCLEOTIDE SEQUENCE [LARGE SCALE MRNA] (ISOFORM 1)</scope>
    <source>
        <tissue evidence="22">Brain</tissue>
    </source>
</reference>
<reference evidence="18 21" key="3">
    <citation type="journal article" date="2005" name="Science">
        <title>The transcriptional landscape of the mammalian genome.</title>
        <authorList>
            <person name="Carninci P."/>
            <person name="Kasukawa T."/>
            <person name="Katayama S."/>
            <person name="Gough J."/>
            <person name="Frith M.C."/>
            <person name="Maeda N."/>
            <person name="Oyama R."/>
            <person name="Ravasi T."/>
            <person name="Lenhard B."/>
            <person name="Wells C."/>
            <person name="Kodzius R."/>
            <person name="Shimokawa K."/>
            <person name="Bajic V.B."/>
            <person name="Brenner S.E."/>
            <person name="Batalov S."/>
            <person name="Forrest A.R."/>
            <person name="Zavolan M."/>
            <person name="Davis M.J."/>
            <person name="Wilming L.G."/>
            <person name="Aidinis V."/>
            <person name="Allen J.E."/>
            <person name="Ambesi-Impiombato A."/>
            <person name="Apweiler R."/>
            <person name="Aturaliya R.N."/>
            <person name="Bailey T.L."/>
            <person name="Bansal M."/>
            <person name="Baxter L."/>
            <person name="Beisel K.W."/>
            <person name="Bersano T."/>
            <person name="Bono H."/>
            <person name="Chalk A.M."/>
            <person name="Chiu K.P."/>
            <person name="Choudhary V."/>
            <person name="Christoffels A."/>
            <person name="Clutterbuck D.R."/>
            <person name="Crowe M.L."/>
            <person name="Dalla E."/>
            <person name="Dalrymple B.P."/>
            <person name="de Bono B."/>
            <person name="Della Gatta G."/>
            <person name="di Bernardo D."/>
            <person name="Down T."/>
            <person name="Engstrom P."/>
            <person name="Fagiolini M."/>
            <person name="Faulkner G."/>
            <person name="Fletcher C.F."/>
            <person name="Fukushima T."/>
            <person name="Furuno M."/>
            <person name="Futaki S."/>
            <person name="Gariboldi M."/>
            <person name="Georgii-Hemming P."/>
            <person name="Gingeras T.R."/>
            <person name="Gojobori T."/>
            <person name="Green R.E."/>
            <person name="Gustincich S."/>
            <person name="Harbers M."/>
            <person name="Hayashi Y."/>
            <person name="Hensch T.K."/>
            <person name="Hirokawa N."/>
            <person name="Hill D."/>
            <person name="Huminiecki L."/>
            <person name="Iacono M."/>
            <person name="Ikeo K."/>
            <person name="Iwama A."/>
            <person name="Ishikawa T."/>
            <person name="Jakt M."/>
            <person name="Kanapin A."/>
            <person name="Katoh M."/>
            <person name="Kawasawa Y."/>
            <person name="Kelso J."/>
            <person name="Kitamura H."/>
            <person name="Kitano H."/>
            <person name="Kollias G."/>
            <person name="Krishnan S.P."/>
            <person name="Kruger A."/>
            <person name="Kummerfeld S.K."/>
            <person name="Kurochkin I.V."/>
            <person name="Lareau L.F."/>
            <person name="Lazarevic D."/>
            <person name="Lipovich L."/>
            <person name="Liu J."/>
            <person name="Liuni S."/>
            <person name="McWilliam S."/>
            <person name="Madan Babu M."/>
            <person name="Madera M."/>
            <person name="Marchionni L."/>
            <person name="Matsuda H."/>
            <person name="Matsuzawa S."/>
            <person name="Miki H."/>
            <person name="Mignone F."/>
            <person name="Miyake S."/>
            <person name="Morris K."/>
            <person name="Mottagui-Tabar S."/>
            <person name="Mulder N."/>
            <person name="Nakano N."/>
            <person name="Nakauchi H."/>
            <person name="Ng P."/>
            <person name="Nilsson R."/>
            <person name="Nishiguchi S."/>
            <person name="Nishikawa S."/>
            <person name="Nori F."/>
            <person name="Ohara O."/>
            <person name="Okazaki Y."/>
            <person name="Orlando V."/>
            <person name="Pang K.C."/>
            <person name="Pavan W.J."/>
            <person name="Pavesi G."/>
            <person name="Pesole G."/>
            <person name="Petrovsky N."/>
            <person name="Piazza S."/>
            <person name="Reed J."/>
            <person name="Reid J.F."/>
            <person name="Ring B.Z."/>
            <person name="Ringwald M."/>
            <person name="Rost B."/>
            <person name="Ruan Y."/>
            <person name="Salzberg S.L."/>
            <person name="Sandelin A."/>
            <person name="Schneider C."/>
            <person name="Schoenbach C."/>
            <person name="Sekiguchi K."/>
            <person name="Semple C.A."/>
            <person name="Seno S."/>
            <person name="Sessa L."/>
            <person name="Sheng Y."/>
            <person name="Shibata Y."/>
            <person name="Shimada H."/>
            <person name="Shimada K."/>
            <person name="Silva D."/>
            <person name="Sinclair B."/>
            <person name="Sperling S."/>
            <person name="Stupka E."/>
            <person name="Sugiura K."/>
            <person name="Sultana R."/>
            <person name="Takenaka Y."/>
            <person name="Taki K."/>
            <person name="Tammoja K."/>
            <person name="Tan S.L."/>
            <person name="Tang S."/>
            <person name="Taylor M.S."/>
            <person name="Tegner J."/>
            <person name="Teichmann S.A."/>
            <person name="Ueda H.R."/>
            <person name="van Nimwegen E."/>
            <person name="Verardo R."/>
            <person name="Wei C.L."/>
            <person name="Yagi K."/>
            <person name="Yamanishi H."/>
            <person name="Zabarovsky E."/>
            <person name="Zhu S."/>
            <person name="Zimmer A."/>
            <person name="Hide W."/>
            <person name="Bult C."/>
            <person name="Grimmond S.M."/>
            <person name="Teasdale R.D."/>
            <person name="Liu E.T."/>
            <person name="Brusic V."/>
            <person name="Quackenbush J."/>
            <person name="Wahlestedt C."/>
            <person name="Mattick J.S."/>
            <person name="Hume D.A."/>
            <person name="Kai C."/>
            <person name="Sasaki D."/>
            <person name="Tomaru Y."/>
            <person name="Fukuda S."/>
            <person name="Kanamori-Katayama M."/>
            <person name="Suzuki M."/>
            <person name="Aoki J."/>
            <person name="Arakawa T."/>
            <person name="Iida J."/>
            <person name="Imamura K."/>
            <person name="Itoh M."/>
            <person name="Kato T."/>
            <person name="Kawaji H."/>
            <person name="Kawagashira N."/>
            <person name="Kawashima T."/>
            <person name="Kojima M."/>
            <person name="Kondo S."/>
            <person name="Konno H."/>
            <person name="Nakano K."/>
            <person name="Ninomiya N."/>
            <person name="Nishio T."/>
            <person name="Okada M."/>
            <person name="Plessy C."/>
            <person name="Shibata K."/>
            <person name="Shiraki T."/>
            <person name="Suzuki S."/>
            <person name="Tagami M."/>
            <person name="Waki K."/>
            <person name="Watahiki A."/>
            <person name="Okamura-Oho Y."/>
            <person name="Suzuki H."/>
            <person name="Kawai J."/>
            <person name="Hayashizaki Y."/>
        </authorList>
    </citation>
    <scope>NUCLEOTIDE SEQUENCE [LARGE SCALE MRNA] (ISOFORM 13)</scope>
    <scope>NUCLEOTIDE SEQUENCE [LARGE SCALE MRNA] OF 1011-1577 (ISOFORM 15)</scope>
    <source>
        <strain evidence="21">C57BL/6J</strain>
        <tissue evidence="21">Cerebellum</tissue>
        <tissue evidence="23">Corpora quadrigemina</tissue>
    </source>
</reference>
<reference key="4">
    <citation type="journal article" date="2009" name="PLoS Biol.">
        <title>Lineage-specific biology revealed by a finished genome assembly of the mouse.</title>
        <authorList>
            <person name="Church D.M."/>
            <person name="Goodstadt L."/>
            <person name="Hillier L.W."/>
            <person name="Zody M.C."/>
            <person name="Goldstein S."/>
            <person name="She X."/>
            <person name="Bult C.J."/>
            <person name="Agarwala R."/>
            <person name="Cherry J.L."/>
            <person name="DiCuccio M."/>
            <person name="Hlavina W."/>
            <person name="Kapustin Y."/>
            <person name="Meric P."/>
            <person name="Maglott D."/>
            <person name="Birtle Z."/>
            <person name="Marques A.C."/>
            <person name="Graves T."/>
            <person name="Zhou S."/>
            <person name="Teague B."/>
            <person name="Potamousis K."/>
            <person name="Churas C."/>
            <person name="Place M."/>
            <person name="Herschleb J."/>
            <person name="Runnheim R."/>
            <person name="Forrest D."/>
            <person name="Amos-Landgraf J."/>
            <person name="Schwartz D.C."/>
            <person name="Cheng Z."/>
            <person name="Lindblad-Toh K."/>
            <person name="Eichler E.E."/>
            <person name="Ponting C.P."/>
        </authorList>
    </citation>
    <scope>NUCLEOTIDE SEQUENCE [LARGE SCALE GENOMIC DNA]</scope>
    <source>
        <strain>C57BL/6J</strain>
    </source>
</reference>
<reference evidence="18 19" key="5">
    <citation type="journal article" date="2004" name="Genome Res.">
        <title>The status, quality, and expansion of the NIH full-length cDNA project: the Mammalian Gene Collection (MGC).</title>
        <authorList>
            <consortium name="The MGC Project Team"/>
        </authorList>
    </citation>
    <scope>NUCLEOTIDE SEQUENCE [LARGE SCALE MRNA] (ISOFORM 3)</scope>
    <scope>NUCLEOTIDE SEQUENCE [LARGE SCALE MRNA] OF 643-1577 (ISOFORM 14)</scope>
    <source>
        <tissue evidence="19">Eye</tissue>
    </source>
</reference>
<reference key="6">
    <citation type="journal article" date="2001" name="Mol. Biol. Cell">
        <title>Role of Rab3 GDP/GTP exchange protein in synaptic vesicle trafficking at the mouse neuromuscular junction.</title>
        <authorList>
            <person name="Tanaka M."/>
            <person name="Miyoshi J."/>
            <person name="Ishizaki H."/>
            <person name="Togawa A."/>
            <person name="Ohnishi K."/>
            <person name="Endo K."/>
            <person name="Matsubara K."/>
            <person name="Mizoguchi A."/>
            <person name="Nagano T."/>
            <person name="Sato M."/>
            <person name="Sasaki T."/>
            <person name="Takai Y."/>
        </authorList>
    </citation>
    <scope>FUNCTION</scope>
    <scope>DISRUPTION PHENOTYPE</scope>
</reference>
<reference key="7">
    <citation type="journal article" date="2002" name="Proc. Natl. Acad. Sci. U.S.A.">
        <title>A GDP/GTP exchange protein for the Rab3 small G protein family up-regulates a postdocking step of synaptic exocytosis in central synapses.</title>
        <authorList>
            <person name="Yamaguchi K."/>
            <person name="Tanaka M."/>
            <person name="Mizoguchi A."/>
            <person name="Hirata Y."/>
            <person name="Ishizaki H."/>
            <person name="Kaneko K."/>
            <person name="Miyoshi J."/>
            <person name="Takai Y."/>
        </authorList>
    </citation>
    <scope>FUNCTION</scope>
    <scope>DISRUPTION PHENOTYPE</scope>
</reference>
<reference key="8">
    <citation type="journal article" date="2004" name="Mol. Cell. Proteomics">
        <title>Phosphoproteomic analysis of the developing mouse brain.</title>
        <authorList>
            <person name="Ballif B.A."/>
            <person name="Villen J."/>
            <person name="Beausoleil S.A."/>
            <person name="Schwartz D."/>
            <person name="Gygi S.P."/>
        </authorList>
    </citation>
    <scope>IDENTIFICATION BY MASS SPECTROMETRY [LARGE SCALE ANALYSIS]</scope>
    <source>
        <tissue>Embryonic brain</tissue>
    </source>
</reference>
<reference key="9">
    <citation type="journal article" date="2006" name="Mol. Cell. Proteomics">
        <title>Comprehensive identification of phosphorylation sites in postsynaptic density preparations.</title>
        <authorList>
            <person name="Trinidad J.C."/>
            <person name="Specht C.G."/>
            <person name="Thalhammer A."/>
            <person name="Schoepfer R."/>
            <person name="Burlingame A.L."/>
        </authorList>
    </citation>
    <scope>IDENTIFICATION BY MASS SPECTROMETRY [LARGE SCALE ANALYSIS]</scope>
    <source>
        <tissue>Brain</tissue>
    </source>
</reference>
<reference key="10">
    <citation type="journal article" date="2008" name="J. Biol. Chem.">
        <title>Rab3GEP is the non-redundant guanine nucleotide exchange factor for Rab27a in melanocytes.</title>
        <authorList>
            <person name="Figueiredo A.C."/>
            <person name="Wasmeier C."/>
            <person name="Tarafder A.K."/>
            <person name="Ramalho J.S."/>
            <person name="Baron R.A."/>
            <person name="Seabra M.C."/>
        </authorList>
    </citation>
    <scope>FUNCTION</scope>
    <scope>DISRUPTION PHENOTYPE</scope>
</reference>
<reference key="11">
    <citation type="journal article" date="2008" name="Nat. Cell Biol.">
        <title>KIF1Bbeta- and KIF1A-mediated axonal transport of presynaptic regulator Rab3 occurs in a GTP-dependent manner through DENN/MADD.</title>
        <authorList>
            <person name="Niwa S."/>
            <person name="Tanaka Y."/>
            <person name="Hirokawa N."/>
        </authorList>
    </citation>
    <scope>FUNCTION</scope>
    <scope>INTERACTION WITH KIF1B; KIF1A; RAB3A; RAB3B; RAB3C AND RAB3D</scope>
    <scope>SUBCELLULAR LOCATION</scope>
    <scope>TISSUE SPECIFICITY</scope>
    <scope>DISRUPTION PHENOTYPE</scope>
</reference>
<reference key="12">
    <citation type="journal article" date="2010" name="Cell">
        <title>A tissue-specific atlas of mouse protein phosphorylation and expression.</title>
        <authorList>
            <person name="Huttlin E.L."/>
            <person name="Jedrychowski M.P."/>
            <person name="Elias J.E."/>
            <person name="Goswami T."/>
            <person name="Rad R."/>
            <person name="Beausoleil S.A."/>
            <person name="Villen J."/>
            <person name="Haas W."/>
            <person name="Sowa M.E."/>
            <person name="Gygi S.P."/>
        </authorList>
    </citation>
    <scope>PHOSPHORYLATION [LARGE SCALE ANALYSIS] AT SER-817; SER-819; SER-1058; THR-1065; SER-1109; THR-1235 AND SER-1237</scope>
    <scope>IDENTIFICATION BY MASS SPECTROMETRY [LARGE SCALE ANALYSIS]</scope>
    <source>
        <tissue>Brain</tissue>
        <tissue>Kidney</tissue>
        <tissue>Lung</tissue>
        <tissue>Pancreas</tissue>
        <tissue>Spleen</tissue>
        <tissue>Testis</tissue>
    </source>
</reference>
<keyword id="KW-0025">Alternative splicing</keyword>
<keyword id="KW-0053">Apoptosis</keyword>
<keyword id="KW-1003">Cell membrane</keyword>
<keyword id="KW-0966">Cell projection</keyword>
<keyword id="KW-0963">Cytoplasm</keyword>
<keyword id="KW-0344">Guanine-nucleotide releasing factor</keyword>
<keyword id="KW-0472">Membrane</keyword>
<keyword id="KW-0597">Phosphoprotein</keyword>
<keyword id="KW-1185">Reference proteome</keyword>
<gene>
    <name evidence="24" type="primary">Madd</name>
    <name evidence="22" type="synonym">Kiaa0358</name>
</gene>
<protein>
    <recommendedName>
        <fullName>MAP kinase-activating death domain protein</fullName>
    </recommendedName>
    <alternativeName>
        <fullName>Rab3 GDP/GTP exchange factor</fullName>
        <shortName evidence="18">RabGEF</shortName>
    </alternativeName>
    <alternativeName>
        <fullName evidence="14">Rab3 GDP/GTP exchange protein</fullName>
        <shortName evidence="14">Rab3GEP</shortName>
    </alternativeName>
</protein>
<evidence type="ECO:0000250" key="1">
    <source>
        <dbReference type="UniProtKB" id="O08873"/>
    </source>
</evidence>
<evidence type="ECO:0000250" key="2">
    <source>
        <dbReference type="UniProtKB" id="Q8WXG6"/>
    </source>
</evidence>
<evidence type="ECO:0000255" key="3"/>
<evidence type="ECO:0000255" key="4">
    <source>
        <dbReference type="PROSITE-ProRule" id="PRU00304"/>
    </source>
</evidence>
<evidence type="ECO:0000256" key="5">
    <source>
        <dbReference type="SAM" id="MobiDB-lite"/>
    </source>
</evidence>
<evidence type="ECO:0000269" key="6">
    <source>
    </source>
</evidence>
<evidence type="ECO:0000269" key="7">
    <source>
    </source>
</evidence>
<evidence type="ECO:0000269" key="8">
    <source>
    </source>
</evidence>
<evidence type="ECO:0000269" key="9">
    <source>
    </source>
</evidence>
<evidence type="ECO:0000269" key="10">
    <source>
    </source>
</evidence>
<evidence type="ECO:0000269" key="11">
    <source>
    </source>
</evidence>
<evidence type="ECO:0000269" key="12">
    <source>
    </source>
</evidence>
<evidence type="ECO:0000269" key="13">
    <source ref="1"/>
</evidence>
<evidence type="ECO:0000303" key="14">
    <source>
    </source>
</evidence>
<evidence type="ECO:0000303" key="15">
    <source>
    </source>
</evidence>
<evidence type="ECO:0000303" key="16">
    <source>
    </source>
</evidence>
<evidence type="ECO:0000303" key="17">
    <source ref="1"/>
</evidence>
<evidence type="ECO:0000305" key="18"/>
<evidence type="ECO:0000312" key="19">
    <source>
        <dbReference type="EMBL" id="AAH63386.1"/>
    </source>
</evidence>
<evidence type="ECO:0000312" key="20">
    <source>
        <dbReference type="EMBL" id="AAP22159.1"/>
    </source>
</evidence>
<evidence type="ECO:0000312" key="21">
    <source>
        <dbReference type="EMBL" id="BAC29392.1"/>
    </source>
</evidence>
<evidence type="ECO:0000312" key="22">
    <source>
        <dbReference type="EMBL" id="BAC65539.1"/>
    </source>
</evidence>
<evidence type="ECO:0000312" key="23">
    <source>
        <dbReference type="EMBL" id="BAE37379.1"/>
    </source>
</evidence>
<evidence type="ECO:0000312" key="24">
    <source>
        <dbReference type="MGI" id="MGI:2444672"/>
    </source>
</evidence>
<evidence type="ECO:0007744" key="25">
    <source>
    </source>
</evidence>